<reference key="1">
    <citation type="journal article" date="2006" name="Appl. Environ. Microbiol.">
        <title>Genome sequence of the chemolithoautotrophic nitrite-oxidizing bacterium Nitrobacter winogradskyi Nb-255.</title>
        <authorList>
            <person name="Starkenburg S.R."/>
            <person name="Chain P.S.G."/>
            <person name="Sayavedra-Soto L.A."/>
            <person name="Hauser L."/>
            <person name="Land M.L."/>
            <person name="Larimer F.W."/>
            <person name="Malfatti S.A."/>
            <person name="Klotz M.G."/>
            <person name="Bottomley P.J."/>
            <person name="Arp D.J."/>
            <person name="Hickey W.J."/>
        </authorList>
    </citation>
    <scope>NUCLEOTIDE SEQUENCE [LARGE SCALE GENOMIC DNA]</scope>
    <source>
        <strain>ATCC 25391 / DSM 10237 / CIP 104748 / NCIMB 11846 / Nb-255</strain>
    </source>
</reference>
<dbReference type="EMBL" id="CP000115">
    <property type="protein sequence ID" value="ABA04640.1"/>
    <property type="molecule type" value="Genomic_DNA"/>
</dbReference>
<dbReference type="RefSeq" id="WP_011314653.1">
    <property type="nucleotide sequence ID" value="NC_007406.1"/>
</dbReference>
<dbReference type="SMR" id="Q3SSV1"/>
<dbReference type="STRING" id="323098.Nwi_1379"/>
<dbReference type="KEGG" id="nwi:Nwi_1379"/>
<dbReference type="eggNOG" id="COG0097">
    <property type="taxonomic scope" value="Bacteria"/>
</dbReference>
<dbReference type="HOGENOM" id="CLU_065464_1_2_5"/>
<dbReference type="OrthoDB" id="9805007at2"/>
<dbReference type="Proteomes" id="UP000002531">
    <property type="component" value="Chromosome"/>
</dbReference>
<dbReference type="GO" id="GO:0022625">
    <property type="term" value="C:cytosolic large ribosomal subunit"/>
    <property type="evidence" value="ECO:0007669"/>
    <property type="project" value="TreeGrafter"/>
</dbReference>
<dbReference type="GO" id="GO:0019843">
    <property type="term" value="F:rRNA binding"/>
    <property type="evidence" value="ECO:0007669"/>
    <property type="project" value="UniProtKB-UniRule"/>
</dbReference>
<dbReference type="GO" id="GO:0003735">
    <property type="term" value="F:structural constituent of ribosome"/>
    <property type="evidence" value="ECO:0007669"/>
    <property type="project" value="InterPro"/>
</dbReference>
<dbReference type="GO" id="GO:0002181">
    <property type="term" value="P:cytoplasmic translation"/>
    <property type="evidence" value="ECO:0007669"/>
    <property type="project" value="TreeGrafter"/>
</dbReference>
<dbReference type="FunFam" id="3.90.930.12:FF:000001">
    <property type="entry name" value="50S ribosomal protein L6"/>
    <property type="match status" value="1"/>
</dbReference>
<dbReference type="FunFam" id="3.90.930.12:FF:000002">
    <property type="entry name" value="50S ribosomal protein L6"/>
    <property type="match status" value="1"/>
</dbReference>
<dbReference type="Gene3D" id="3.90.930.12">
    <property type="entry name" value="Ribosomal protein L6, alpha-beta domain"/>
    <property type="match status" value="2"/>
</dbReference>
<dbReference type="HAMAP" id="MF_01365_B">
    <property type="entry name" value="Ribosomal_uL6_B"/>
    <property type="match status" value="1"/>
</dbReference>
<dbReference type="InterPro" id="IPR000702">
    <property type="entry name" value="Ribosomal_uL6-like"/>
</dbReference>
<dbReference type="InterPro" id="IPR036789">
    <property type="entry name" value="Ribosomal_uL6-like_a/b-dom_sf"/>
</dbReference>
<dbReference type="InterPro" id="IPR020040">
    <property type="entry name" value="Ribosomal_uL6_a/b-dom"/>
</dbReference>
<dbReference type="InterPro" id="IPR019906">
    <property type="entry name" value="Ribosomal_uL6_bac-type"/>
</dbReference>
<dbReference type="InterPro" id="IPR002358">
    <property type="entry name" value="Ribosomal_uL6_CS"/>
</dbReference>
<dbReference type="NCBIfam" id="TIGR03654">
    <property type="entry name" value="L6_bact"/>
    <property type="match status" value="1"/>
</dbReference>
<dbReference type="PANTHER" id="PTHR11655">
    <property type="entry name" value="60S/50S RIBOSOMAL PROTEIN L6/L9"/>
    <property type="match status" value="1"/>
</dbReference>
<dbReference type="PANTHER" id="PTHR11655:SF14">
    <property type="entry name" value="LARGE RIBOSOMAL SUBUNIT PROTEIN UL6M"/>
    <property type="match status" value="1"/>
</dbReference>
<dbReference type="Pfam" id="PF00347">
    <property type="entry name" value="Ribosomal_L6"/>
    <property type="match status" value="2"/>
</dbReference>
<dbReference type="PIRSF" id="PIRSF002162">
    <property type="entry name" value="Ribosomal_L6"/>
    <property type="match status" value="1"/>
</dbReference>
<dbReference type="PRINTS" id="PR00059">
    <property type="entry name" value="RIBOSOMALL6"/>
</dbReference>
<dbReference type="SUPFAM" id="SSF56053">
    <property type="entry name" value="Ribosomal protein L6"/>
    <property type="match status" value="2"/>
</dbReference>
<dbReference type="PROSITE" id="PS00525">
    <property type="entry name" value="RIBOSOMAL_L6_1"/>
    <property type="match status" value="1"/>
</dbReference>
<evidence type="ECO:0000255" key="1">
    <source>
        <dbReference type="HAMAP-Rule" id="MF_01365"/>
    </source>
</evidence>
<evidence type="ECO:0000305" key="2"/>
<feature type="chain" id="PRO_0000260903" description="Large ribosomal subunit protein uL6">
    <location>
        <begin position="1"/>
        <end position="177"/>
    </location>
</feature>
<proteinExistence type="inferred from homology"/>
<gene>
    <name evidence="1" type="primary">rplF</name>
    <name type="ordered locus">Nwi_1379</name>
</gene>
<accession>Q3SSV1</accession>
<sequence length="177" mass="19135">MSRIGKRPVTVPSGVTATVEGQTVKMKGPKGELRFVVHDDVEVKLEDGAVKVAPRYETKRAQALYGTARAQVANLVAGVTKGFEKKLEIIGVGYRAALQGKSLQLALGYSHDVNYAVPEGITIAVPKPTEITITGNDAQRVGQVAAEIRGYRPPEPYKGKGVKYADETIFRKEGKKK</sequence>
<name>RL6_NITWN</name>
<protein>
    <recommendedName>
        <fullName evidence="1">Large ribosomal subunit protein uL6</fullName>
    </recommendedName>
    <alternativeName>
        <fullName evidence="2">50S ribosomal protein L6</fullName>
    </alternativeName>
</protein>
<organism>
    <name type="scientific">Nitrobacter winogradskyi (strain ATCC 25391 / DSM 10237 / CIP 104748 / NCIMB 11846 / Nb-255)</name>
    <dbReference type="NCBI Taxonomy" id="323098"/>
    <lineage>
        <taxon>Bacteria</taxon>
        <taxon>Pseudomonadati</taxon>
        <taxon>Pseudomonadota</taxon>
        <taxon>Alphaproteobacteria</taxon>
        <taxon>Hyphomicrobiales</taxon>
        <taxon>Nitrobacteraceae</taxon>
        <taxon>Nitrobacter</taxon>
    </lineage>
</organism>
<keyword id="KW-1185">Reference proteome</keyword>
<keyword id="KW-0687">Ribonucleoprotein</keyword>
<keyword id="KW-0689">Ribosomal protein</keyword>
<keyword id="KW-0694">RNA-binding</keyword>
<keyword id="KW-0699">rRNA-binding</keyword>
<comment type="function">
    <text evidence="1">This protein binds to the 23S rRNA, and is important in its secondary structure. It is located near the subunit interface in the base of the L7/L12 stalk, and near the tRNA binding site of the peptidyltransferase center.</text>
</comment>
<comment type="subunit">
    <text evidence="1">Part of the 50S ribosomal subunit.</text>
</comment>
<comment type="similarity">
    <text evidence="1">Belongs to the universal ribosomal protein uL6 family.</text>
</comment>